<name>RS4_THEFY</name>
<keyword id="KW-0687">Ribonucleoprotein</keyword>
<keyword id="KW-0689">Ribosomal protein</keyword>
<keyword id="KW-0694">RNA-binding</keyword>
<keyword id="KW-0699">rRNA-binding</keyword>
<sequence length="203" mass="23335">MRYTGPKVRLSRRAGVPLTRKAVKYFEKRPYPPGEHGRRVRRSTSDYAVRQAEKQKLRWYYDLSEKQLARVYENAKKRPGRTGEEMIAELELRLATVLLRAGFAASIYAARQFINHGHITVDGKKVDIPSYQVKPGQIVSVREKSRKLVPFIEAAEGVHADEKIASYLAVSHKDLTIAVVDRPKREQVPVPFDEQLVVEYYAR</sequence>
<protein>
    <recommendedName>
        <fullName evidence="1">Small ribosomal subunit protein uS4</fullName>
    </recommendedName>
    <alternativeName>
        <fullName evidence="2">30S ribosomal protein S4</fullName>
    </alternativeName>
</protein>
<evidence type="ECO:0000255" key="1">
    <source>
        <dbReference type="HAMAP-Rule" id="MF_01306"/>
    </source>
</evidence>
<evidence type="ECO:0000305" key="2"/>
<comment type="function">
    <text evidence="1">One of the primary rRNA binding proteins, it binds directly to 16S rRNA where it nucleates assembly of the body of the 30S subunit.</text>
</comment>
<comment type="function">
    <text evidence="1">With S5 and S12 plays an important role in translational accuracy.</text>
</comment>
<comment type="subunit">
    <text evidence="1">Part of the 30S ribosomal subunit. Contacts protein S5. The interaction surface between S4 and S5 is involved in control of translational fidelity.</text>
</comment>
<comment type="similarity">
    <text evidence="1">Belongs to the universal ribosomal protein uS4 family.</text>
</comment>
<feature type="chain" id="PRO_0000228934" description="Small ribosomal subunit protein uS4">
    <location>
        <begin position="1"/>
        <end position="203"/>
    </location>
</feature>
<feature type="domain" description="S4 RNA-binding" evidence="1">
    <location>
        <begin position="92"/>
        <end position="152"/>
    </location>
</feature>
<dbReference type="EMBL" id="CP000088">
    <property type="protein sequence ID" value="AAZ55051.1"/>
    <property type="molecule type" value="Genomic_DNA"/>
</dbReference>
<dbReference type="RefSeq" id="WP_011291460.1">
    <property type="nucleotide sequence ID" value="NC_007333.1"/>
</dbReference>
<dbReference type="SMR" id="Q47R66"/>
<dbReference type="STRING" id="269800.Tfu_1013"/>
<dbReference type="KEGG" id="tfu:Tfu_1013"/>
<dbReference type="eggNOG" id="COG0522">
    <property type="taxonomic scope" value="Bacteria"/>
</dbReference>
<dbReference type="HOGENOM" id="CLU_092403_0_3_11"/>
<dbReference type="OrthoDB" id="9803672at2"/>
<dbReference type="GO" id="GO:0015935">
    <property type="term" value="C:small ribosomal subunit"/>
    <property type="evidence" value="ECO:0007669"/>
    <property type="project" value="InterPro"/>
</dbReference>
<dbReference type="GO" id="GO:0019843">
    <property type="term" value="F:rRNA binding"/>
    <property type="evidence" value="ECO:0007669"/>
    <property type="project" value="UniProtKB-UniRule"/>
</dbReference>
<dbReference type="GO" id="GO:0003735">
    <property type="term" value="F:structural constituent of ribosome"/>
    <property type="evidence" value="ECO:0007669"/>
    <property type="project" value="InterPro"/>
</dbReference>
<dbReference type="GO" id="GO:0042274">
    <property type="term" value="P:ribosomal small subunit biogenesis"/>
    <property type="evidence" value="ECO:0007669"/>
    <property type="project" value="TreeGrafter"/>
</dbReference>
<dbReference type="GO" id="GO:0006412">
    <property type="term" value="P:translation"/>
    <property type="evidence" value="ECO:0007669"/>
    <property type="project" value="UniProtKB-UniRule"/>
</dbReference>
<dbReference type="CDD" id="cd00165">
    <property type="entry name" value="S4"/>
    <property type="match status" value="1"/>
</dbReference>
<dbReference type="FunFam" id="3.10.290.10:FF:000001">
    <property type="entry name" value="30S ribosomal protein S4"/>
    <property type="match status" value="1"/>
</dbReference>
<dbReference type="Gene3D" id="1.10.1050.10">
    <property type="entry name" value="Ribosomal Protein S4 Delta 41, Chain A, domain 1"/>
    <property type="match status" value="1"/>
</dbReference>
<dbReference type="Gene3D" id="3.10.290.10">
    <property type="entry name" value="RNA-binding S4 domain"/>
    <property type="match status" value="1"/>
</dbReference>
<dbReference type="HAMAP" id="MF_01306_B">
    <property type="entry name" value="Ribosomal_uS4_B"/>
    <property type="match status" value="1"/>
</dbReference>
<dbReference type="InterPro" id="IPR022801">
    <property type="entry name" value="Ribosomal_uS4"/>
</dbReference>
<dbReference type="InterPro" id="IPR005709">
    <property type="entry name" value="Ribosomal_uS4_bac-type"/>
</dbReference>
<dbReference type="InterPro" id="IPR018079">
    <property type="entry name" value="Ribosomal_uS4_CS"/>
</dbReference>
<dbReference type="InterPro" id="IPR001912">
    <property type="entry name" value="Ribosomal_uS4_N"/>
</dbReference>
<dbReference type="InterPro" id="IPR002942">
    <property type="entry name" value="S4_RNA-bd"/>
</dbReference>
<dbReference type="InterPro" id="IPR036986">
    <property type="entry name" value="S4_RNA-bd_sf"/>
</dbReference>
<dbReference type="NCBIfam" id="NF003717">
    <property type="entry name" value="PRK05327.1"/>
    <property type="match status" value="1"/>
</dbReference>
<dbReference type="NCBIfam" id="TIGR01017">
    <property type="entry name" value="rpsD_bact"/>
    <property type="match status" value="1"/>
</dbReference>
<dbReference type="PANTHER" id="PTHR11831">
    <property type="entry name" value="30S 40S RIBOSOMAL PROTEIN"/>
    <property type="match status" value="1"/>
</dbReference>
<dbReference type="PANTHER" id="PTHR11831:SF4">
    <property type="entry name" value="SMALL RIBOSOMAL SUBUNIT PROTEIN US4M"/>
    <property type="match status" value="1"/>
</dbReference>
<dbReference type="Pfam" id="PF00163">
    <property type="entry name" value="Ribosomal_S4"/>
    <property type="match status" value="1"/>
</dbReference>
<dbReference type="Pfam" id="PF01479">
    <property type="entry name" value="S4"/>
    <property type="match status" value="1"/>
</dbReference>
<dbReference type="SMART" id="SM01390">
    <property type="entry name" value="Ribosomal_S4"/>
    <property type="match status" value="1"/>
</dbReference>
<dbReference type="SMART" id="SM00363">
    <property type="entry name" value="S4"/>
    <property type="match status" value="1"/>
</dbReference>
<dbReference type="SUPFAM" id="SSF55174">
    <property type="entry name" value="Alpha-L RNA-binding motif"/>
    <property type="match status" value="1"/>
</dbReference>
<dbReference type="PROSITE" id="PS00632">
    <property type="entry name" value="RIBOSOMAL_S4"/>
    <property type="match status" value="1"/>
</dbReference>
<dbReference type="PROSITE" id="PS50889">
    <property type="entry name" value="S4"/>
    <property type="match status" value="1"/>
</dbReference>
<proteinExistence type="inferred from homology"/>
<accession>Q47R66</accession>
<reference key="1">
    <citation type="journal article" date="2007" name="J. Bacteriol.">
        <title>Genome sequence and analysis of the soil cellulolytic actinomycete Thermobifida fusca YX.</title>
        <authorList>
            <person name="Lykidis A."/>
            <person name="Mavromatis K."/>
            <person name="Ivanova N."/>
            <person name="Anderson I."/>
            <person name="Land M."/>
            <person name="DiBartolo G."/>
            <person name="Martinez M."/>
            <person name="Lapidus A."/>
            <person name="Lucas S."/>
            <person name="Copeland A."/>
            <person name="Richardson P."/>
            <person name="Wilson D.B."/>
            <person name="Kyrpides N."/>
        </authorList>
    </citation>
    <scope>NUCLEOTIDE SEQUENCE [LARGE SCALE GENOMIC DNA]</scope>
    <source>
        <strain>YX</strain>
    </source>
</reference>
<gene>
    <name evidence="1" type="primary">rpsD</name>
    <name type="ordered locus">Tfu_1013</name>
</gene>
<organism>
    <name type="scientific">Thermobifida fusca (strain YX)</name>
    <dbReference type="NCBI Taxonomy" id="269800"/>
    <lineage>
        <taxon>Bacteria</taxon>
        <taxon>Bacillati</taxon>
        <taxon>Actinomycetota</taxon>
        <taxon>Actinomycetes</taxon>
        <taxon>Streptosporangiales</taxon>
        <taxon>Nocardiopsidaceae</taxon>
        <taxon>Thermobifida</taxon>
    </lineage>
</organism>